<reference key="1">
    <citation type="journal article" date="2009" name="J. Bacteriol.">
        <title>Complete genome sequence of the extremophilic Bacillus cereus strain Q1 with industrial applications.</title>
        <authorList>
            <person name="Xiong Z."/>
            <person name="Jiang Y."/>
            <person name="Qi D."/>
            <person name="Lu H."/>
            <person name="Yang F."/>
            <person name="Yang J."/>
            <person name="Chen L."/>
            <person name="Sun L."/>
            <person name="Xu X."/>
            <person name="Xue Y."/>
            <person name="Zhu Y."/>
            <person name="Jin Q."/>
        </authorList>
    </citation>
    <scope>NUCLEOTIDE SEQUENCE [LARGE SCALE GENOMIC DNA]</scope>
    <source>
        <strain>Q1</strain>
    </source>
</reference>
<evidence type="ECO:0000255" key="1">
    <source>
        <dbReference type="HAMAP-Rule" id="MF_00665"/>
    </source>
</evidence>
<evidence type="ECO:0000256" key="2">
    <source>
        <dbReference type="SAM" id="MobiDB-lite"/>
    </source>
</evidence>
<sequence length="49" mass="5364">MGKRKANHTISGMNAASAQGQGAGYNEEFANENLTAAERQNNKKRKKNQ</sequence>
<feature type="chain" id="PRO_1000147652" description="Small, acid-soluble spore protein O">
    <location>
        <begin position="1"/>
        <end position="49"/>
    </location>
</feature>
<feature type="region of interest" description="Disordered" evidence="2">
    <location>
        <begin position="1"/>
        <end position="49"/>
    </location>
</feature>
<feature type="compositionally biased region" description="Polar residues" evidence="2">
    <location>
        <begin position="8"/>
        <end position="20"/>
    </location>
</feature>
<protein>
    <recommendedName>
        <fullName evidence="1">Small, acid-soluble spore protein O</fullName>
        <shortName evidence="1">SASP O</shortName>
    </recommendedName>
</protein>
<organism>
    <name type="scientific">Bacillus cereus (strain Q1)</name>
    <dbReference type="NCBI Taxonomy" id="361100"/>
    <lineage>
        <taxon>Bacteria</taxon>
        <taxon>Bacillati</taxon>
        <taxon>Bacillota</taxon>
        <taxon>Bacilli</taxon>
        <taxon>Bacillales</taxon>
        <taxon>Bacillaceae</taxon>
        <taxon>Bacillus</taxon>
        <taxon>Bacillus cereus group</taxon>
    </lineage>
</organism>
<proteinExistence type="inferred from homology"/>
<dbReference type="EMBL" id="CP000227">
    <property type="protein sequence ID" value="ACM13837.1"/>
    <property type="molecule type" value="Genomic_DNA"/>
</dbReference>
<dbReference type="KEGG" id="bcq:BCQ_3409"/>
<dbReference type="HOGENOM" id="CLU_206342_0_0_9"/>
<dbReference type="Proteomes" id="UP000000441">
    <property type="component" value="Chromosome"/>
</dbReference>
<dbReference type="GO" id="GO:0042601">
    <property type="term" value="C:endospore-forming forespore"/>
    <property type="evidence" value="ECO:0007669"/>
    <property type="project" value="InterPro"/>
</dbReference>
<dbReference type="GO" id="GO:0030436">
    <property type="term" value="P:asexual sporulation"/>
    <property type="evidence" value="ECO:0007669"/>
    <property type="project" value="UniProtKB-UniRule"/>
</dbReference>
<dbReference type="GO" id="GO:0030435">
    <property type="term" value="P:sporulation resulting in formation of a cellular spore"/>
    <property type="evidence" value="ECO:0007669"/>
    <property type="project" value="UniProtKB-KW"/>
</dbReference>
<dbReference type="HAMAP" id="MF_00665">
    <property type="entry name" value="SspO"/>
    <property type="match status" value="1"/>
</dbReference>
<dbReference type="InterPro" id="IPR012613">
    <property type="entry name" value="SASP_SspO"/>
</dbReference>
<dbReference type="NCBIfam" id="TIGR02864">
    <property type="entry name" value="spore_sspO"/>
    <property type="match status" value="1"/>
</dbReference>
<dbReference type="Pfam" id="PF08175">
    <property type="entry name" value="SspO"/>
    <property type="match status" value="1"/>
</dbReference>
<name>SSPO_BACCQ</name>
<accession>B9IUC7</accession>
<gene>
    <name evidence="1" type="primary">sspO</name>
    <name type="ordered locus">BCQ_3409</name>
</gene>
<keyword id="KW-0749">Sporulation</keyword>
<comment type="subcellular location">
    <subcellularLocation>
        <location evidence="1">Spore core</location>
    </subcellularLocation>
</comment>
<comment type="induction">
    <text evidence="1">Expressed only in the forespore compartment of sporulating cells.</text>
</comment>
<comment type="similarity">
    <text evidence="1">Belongs to the SspO family.</text>
</comment>